<gene>
    <name evidence="1" type="primary">tmk</name>
    <name type="ordered locus">ACL_0127</name>
</gene>
<proteinExistence type="inferred from homology"/>
<reference key="1">
    <citation type="journal article" date="2011" name="J. Bacteriol.">
        <title>Complete genome and proteome of Acholeplasma laidlawii.</title>
        <authorList>
            <person name="Lazarev V.N."/>
            <person name="Levitskii S.A."/>
            <person name="Basovskii Y.I."/>
            <person name="Chukin M.M."/>
            <person name="Akopian T.A."/>
            <person name="Vereshchagin V.V."/>
            <person name="Kostrjukova E.S."/>
            <person name="Kovaleva G.Y."/>
            <person name="Kazanov M.D."/>
            <person name="Malko D.B."/>
            <person name="Vitreschak A.G."/>
            <person name="Sernova N.V."/>
            <person name="Gelfand M.S."/>
            <person name="Demina I.A."/>
            <person name="Serebryakova M.V."/>
            <person name="Galyamina M.A."/>
            <person name="Vtyurin N.N."/>
            <person name="Rogov S.I."/>
            <person name="Alexeev D.G."/>
            <person name="Ladygina V.G."/>
            <person name="Govorun V.M."/>
        </authorList>
    </citation>
    <scope>NUCLEOTIDE SEQUENCE [LARGE SCALE GENOMIC DNA]</scope>
    <source>
        <strain>PG-8A</strain>
    </source>
</reference>
<dbReference type="EC" id="2.7.4.9" evidence="1"/>
<dbReference type="EMBL" id="CP000896">
    <property type="protein sequence ID" value="ABX80753.1"/>
    <property type="molecule type" value="Genomic_DNA"/>
</dbReference>
<dbReference type="RefSeq" id="WP_012242084.1">
    <property type="nucleotide sequence ID" value="NC_010163.1"/>
</dbReference>
<dbReference type="SMR" id="A9NEH3"/>
<dbReference type="STRING" id="441768.ACL_0127"/>
<dbReference type="GeneID" id="41338327"/>
<dbReference type="KEGG" id="acl:ACL_0127"/>
<dbReference type="eggNOG" id="COG0125">
    <property type="taxonomic scope" value="Bacteria"/>
</dbReference>
<dbReference type="HOGENOM" id="CLU_049131_0_2_14"/>
<dbReference type="OrthoDB" id="9774907at2"/>
<dbReference type="Proteomes" id="UP000008558">
    <property type="component" value="Chromosome"/>
</dbReference>
<dbReference type="GO" id="GO:0005829">
    <property type="term" value="C:cytosol"/>
    <property type="evidence" value="ECO:0007669"/>
    <property type="project" value="TreeGrafter"/>
</dbReference>
<dbReference type="GO" id="GO:0005524">
    <property type="term" value="F:ATP binding"/>
    <property type="evidence" value="ECO:0007669"/>
    <property type="project" value="UniProtKB-UniRule"/>
</dbReference>
<dbReference type="GO" id="GO:0004798">
    <property type="term" value="F:dTMP kinase activity"/>
    <property type="evidence" value="ECO:0007669"/>
    <property type="project" value="UniProtKB-UniRule"/>
</dbReference>
<dbReference type="GO" id="GO:0006233">
    <property type="term" value="P:dTDP biosynthetic process"/>
    <property type="evidence" value="ECO:0007669"/>
    <property type="project" value="InterPro"/>
</dbReference>
<dbReference type="GO" id="GO:0006235">
    <property type="term" value="P:dTTP biosynthetic process"/>
    <property type="evidence" value="ECO:0007669"/>
    <property type="project" value="UniProtKB-UniRule"/>
</dbReference>
<dbReference type="GO" id="GO:0006227">
    <property type="term" value="P:dUDP biosynthetic process"/>
    <property type="evidence" value="ECO:0007669"/>
    <property type="project" value="TreeGrafter"/>
</dbReference>
<dbReference type="CDD" id="cd01672">
    <property type="entry name" value="TMPK"/>
    <property type="match status" value="1"/>
</dbReference>
<dbReference type="FunFam" id="3.40.50.300:FF:000225">
    <property type="entry name" value="Thymidylate kinase"/>
    <property type="match status" value="1"/>
</dbReference>
<dbReference type="Gene3D" id="3.40.50.300">
    <property type="entry name" value="P-loop containing nucleotide triphosphate hydrolases"/>
    <property type="match status" value="1"/>
</dbReference>
<dbReference type="HAMAP" id="MF_00165">
    <property type="entry name" value="Thymidylate_kinase"/>
    <property type="match status" value="1"/>
</dbReference>
<dbReference type="InterPro" id="IPR027417">
    <property type="entry name" value="P-loop_NTPase"/>
</dbReference>
<dbReference type="InterPro" id="IPR039430">
    <property type="entry name" value="Thymidylate_kin-like_dom"/>
</dbReference>
<dbReference type="InterPro" id="IPR018095">
    <property type="entry name" value="Thymidylate_kin_CS"/>
</dbReference>
<dbReference type="InterPro" id="IPR018094">
    <property type="entry name" value="Thymidylate_kinase"/>
</dbReference>
<dbReference type="NCBIfam" id="TIGR00041">
    <property type="entry name" value="DTMP_kinase"/>
    <property type="match status" value="1"/>
</dbReference>
<dbReference type="PANTHER" id="PTHR10344">
    <property type="entry name" value="THYMIDYLATE KINASE"/>
    <property type="match status" value="1"/>
</dbReference>
<dbReference type="PANTHER" id="PTHR10344:SF4">
    <property type="entry name" value="UMP-CMP KINASE 2, MITOCHONDRIAL"/>
    <property type="match status" value="1"/>
</dbReference>
<dbReference type="Pfam" id="PF02223">
    <property type="entry name" value="Thymidylate_kin"/>
    <property type="match status" value="1"/>
</dbReference>
<dbReference type="SUPFAM" id="SSF52540">
    <property type="entry name" value="P-loop containing nucleoside triphosphate hydrolases"/>
    <property type="match status" value="1"/>
</dbReference>
<dbReference type="PROSITE" id="PS01331">
    <property type="entry name" value="THYMIDYLATE_KINASE"/>
    <property type="match status" value="1"/>
</dbReference>
<name>KTHY_ACHLI</name>
<organism>
    <name type="scientific">Acholeplasma laidlawii (strain PG-8A)</name>
    <dbReference type="NCBI Taxonomy" id="441768"/>
    <lineage>
        <taxon>Bacteria</taxon>
        <taxon>Bacillati</taxon>
        <taxon>Mycoplasmatota</taxon>
        <taxon>Mollicutes</taxon>
        <taxon>Acholeplasmatales</taxon>
        <taxon>Acholeplasmataceae</taxon>
        <taxon>Acholeplasma</taxon>
    </lineage>
</organism>
<feature type="chain" id="PRO_1000076956" description="Thymidylate kinase">
    <location>
        <begin position="1"/>
        <end position="201"/>
    </location>
</feature>
<feature type="binding site" evidence="1">
    <location>
        <begin position="7"/>
        <end position="14"/>
    </location>
    <ligand>
        <name>ATP</name>
        <dbReference type="ChEBI" id="CHEBI:30616"/>
    </ligand>
</feature>
<protein>
    <recommendedName>
        <fullName evidence="1">Thymidylate kinase</fullName>
        <ecNumber evidence="1">2.7.4.9</ecNumber>
    </recommendedName>
    <alternativeName>
        <fullName evidence="1">dTMP kinase</fullName>
    </alternativeName>
</protein>
<keyword id="KW-0067">ATP-binding</keyword>
<keyword id="KW-0418">Kinase</keyword>
<keyword id="KW-0545">Nucleotide biosynthesis</keyword>
<keyword id="KW-0547">Nucleotide-binding</keyword>
<keyword id="KW-1185">Reference proteome</keyword>
<keyword id="KW-0808">Transferase</keyword>
<accession>A9NEH3</accession>
<sequence>MFITFEGGEGSGKTTLIEKLKHTLLEKKYDVLTTREPGGSKVAEKIRSVLLDNKNTEITAHTEALLFAASRAQHLDEVIIPNLDKVILCDRYIDSSYAYQAFGRNLGMEFVQSINSYALKYLPDLTFYIDLDPKTGIDRVKKNRLHKTDRLDMEVQTFHQKVREGYIRISEMFKERIVVIDGNQSIDAIYQIIMDNILKRL</sequence>
<comment type="function">
    <text evidence="1">Phosphorylation of dTMP to form dTDP in both de novo and salvage pathways of dTTP synthesis.</text>
</comment>
<comment type="catalytic activity">
    <reaction evidence="1">
        <text>dTMP + ATP = dTDP + ADP</text>
        <dbReference type="Rhea" id="RHEA:13517"/>
        <dbReference type="ChEBI" id="CHEBI:30616"/>
        <dbReference type="ChEBI" id="CHEBI:58369"/>
        <dbReference type="ChEBI" id="CHEBI:63528"/>
        <dbReference type="ChEBI" id="CHEBI:456216"/>
        <dbReference type="EC" id="2.7.4.9"/>
    </reaction>
</comment>
<comment type="similarity">
    <text evidence="1">Belongs to the thymidylate kinase family.</text>
</comment>
<evidence type="ECO:0000255" key="1">
    <source>
        <dbReference type="HAMAP-Rule" id="MF_00165"/>
    </source>
</evidence>